<proteinExistence type="inferred from homology"/>
<sequence>MRTYEIMYIVRPNIEEDAKKALVERFNGILASEGSEVLEEKDWGKRRLAYEINDFKEGFYNIVRIKTDNNKSTDEFQRLAKINDDIIRYIVIREDQDK</sequence>
<comment type="function">
    <text evidence="1">Binds together with bS18 to 16S ribosomal RNA.</text>
</comment>
<comment type="similarity">
    <text evidence="1">Belongs to the bacterial ribosomal protein bS6 family.</text>
</comment>
<protein>
    <recommendedName>
        <fullName evidence="1">Small ribosomal subunit protein bS6</fullName>
    </recommendedName>
    <alternativeName>
        <fullName evidence="2">30S ribosomal protein S6</fullName>
    </alternativeName>
</protein>
<keyword id="KW-1185">Reference proteome</keyword>
<keyword id="KW-0687">Ribonucleoprotein</keyword>
<keyword id="KW-0689">Ribosomal protein</keyword>
<keyword id="KW-0694">RNA-binding</keyword>
<keyword id="KW-0699">rRNA-binding</keyword>
<dbReference type="EMBL" id="CP000029">
    <property type="protein sequence ID" value="AAW53429.1"/>
    <property type="molecule type" value="Genomic_DNA"/>
</dbReference>
<dbReference type="RefSeq" id="WP_001831345.1">
    <property type="nucleotide sequence ID" value="NC_002976.3"/>
</dbReference>
<dbReference type="SMR" id="Q5HRZ5"/>
<dbReference type="STRING" id="176279.SERP0044"/>
<dbReference type="GeneID" id="50019678"/>
<dbReference type="KEGG" id="ser:SERP0044"/>
<dbReference type="eggNOG" id="COG0360">
    <property type="taxonomic scope" value="Bacteria"/>
</dbReference>
<dbReference type="HOGENOM" id="CLU_113441_5_3_9"/>
<dbReference type="Proteomes" id="UP000000531">
    <property type="component" value="Chromosome"/>
</dbReference>
<dbReference type="GO" id="GO:0005737">
    <property type="term" value="C:cytoplasm"/>
    <property type="evidence" value="ECO:0007669"/>
    <property type="project" value="UniProtKB-ARBA"/>
</dbReference>
<dbReference type="GO" id="GO:1990904">
    <property type="term" value="C:ribonucleoprotein complex"/>
    <property type="evidence" value="ECO:0007669"/>
    <property type="project" value="UniProtKB-KW"/>
</dbReference>
<dbReference type="GO" id="GO:0005840">
    <property type="term" value="C:ribosome"/>
    <property type="evidence" value="ECO:0007669"/>
    <property type="project" value="UniProtKB-KW"/>
</dbReference>
<dbReference type="GO" id="GO:0070181">
    <property type="term" value="F:small ribosomal subunit rRNA binding"/>
    <property type="evidence" value="ECO:0007669"/>
    <property type="project" value="TreeGrafter"/>
</dbReference>
<dbReference type="GO" id="GO:0003735">
    <property type="term" value="F:structural constituent of ribosome"/>
    <property type="evidence" value="ECO:0007669"/>
    <property type="project" value="InterPro"/>
</dbReference>
<dbReference type="GO" id="GO:0006412">
    <property type="term" value="P:translation"/>
    <property type="evidence" value="ECO:0007669"/>
    <property type="project" value="UniProtKB-UniRule"/>
</dbReference>
<dbReference type="CDD" id="cd00473">
    <property type="entry name" value="bS6"/>
    <property type="match status" value="1"/>
</dbReference>
<dbReference type="FunFam" id="3.30.70.60:FF:000002">
    <property type="entry name" value="30S ribosomal protein S6"/>
    <property type="match status" value="1"/>
</dbReference>
<dbReference type="Gene3D" id="3.30.70.60">
    <property type="match status" value="1"/>
</dbReference>
<dbReference type="HAMAP" id="MF_00360">
    <property type="entry name" value="Ribosomal_bS6"/>
    <property type="match status" value="1"/>
</dbReference>
<dbReference type="InterPro" id="IPR000529">
    <property type="entry name" value="Ribosomal_bS6"/>
</dbReference>
<dbReference type="InterPro" id="IPR020815">
    <property type="entry name" value="Ribosomal_bS6_CS"/>
</dbReference>
<dbReference type="InterPro" id="IPR035980">
    <property type="entry name" value="Ribosomal_bS6_sf"/>
</dbReference>
<dbReference type="InterPro" id="IPR020814">
    <property type="entry name" value="Ribosomal_S6_plastid/chlpt"/>
</dbReference>
<dbReference type="InterPro" id="IPR014717">
    <property type="entry name" value="Transl_elong_EF1B/ribsomal_bS6"/>
</dbReference>
<dbReference type="NCBIfam" id="TIGR00166">
    <property type="entry name" value="S6"/>
    <property type="match status" value="1"/>
</dbReference>
<dbReference type="PANTHER" id="PTHR21011">
    <property type="entry name" value="MITOCHONDRIAL 28S RIBOSOMAL PROTEIN S6"/>
    <property type="match status" value="1"/>
</dbReference>
<dbReference type="PANTHER" id="PTHR21011:SF1">
    <property type="entry name" value="SMALL RIBOSOMAL SUBUNIT PROTEIN BS6M"/>
    <property type="match status" value="1"/>
</dbReference>
<dbReference type="Pfam" id="PF01250">
    <property type="entry name" value="Ribosomal_S6"/>
    <property type="match status" value="1"/>
</dbReference>
<dbReference type="SUPFAM" id="SSF54995">
    <property type="entry name" value="Ribosomal protein S6"/>
    <property type="match status" value="1"/>
</dbReference>
<dbReference type="PROSITE" id="PS01048">
    <property type="entry name" value="RIBOSOMAL_S6"/>
    <property type="match status" value="1"/>
</dbReference>
<reference key="1">
    <citation type="journal article" date="2005" name="J. Bacteriol.">
        <title>Insights on evolution of virulence and resistance from the complete genome analysis of an early methicillin-resistant Staphylococcus aureus strain and a biofilm-producing methicillin-resistant Staphylococcus epidermidis strain.</title>
        <authorList>
            <person name="Gill S.R."/>
            <person name="Fouts D.E."/>
            <person name="Archer G.L."/>
            <person name="Mongodin E.F."/>
            <person name="DeBoy R.T."/>
            <person name="Ravel J."/>
            <person name="Paulsen I.T."/>
            <person name="Kolonay J.F."/>
            <person name="Brinkac L.M."/>
            <person name="Beanan M.J."/>
            <person name="Dodson R.J."/>
            <person name="Daugherty S.C."/>
            <person name="Madupu R."/>
            <person name="Angiuoli S.V."/>
            <person name="Durkin A.S."/>
            <person name="Haft D.H."/>
            <person name="Vamathevan J.J."/>
            <person name="Khouri H."/>
            <person name="Utterback T.R."/>
            <person name="Lee C."/>
            <person name="Dimitrov G."/>
            <person name="Jiang L."/>
            <person name="Qin H."/>
            <person name="Weidman J."/>
            <person name="Tran K."/>
            <person name="Kang K.H."/>
            <person name="Hance I.R."/>
            <person name="Nelson K.E."/>
            <person name="Fraser C.M."/>
        </authorList>
    </citation>
    <scope>NUCLEOTIDE SEQUENCE [LARGE SCALE GENOMIC DNA]</scope>
    <source>
        <strain>ATCC 35984 / DSM 28319 / BCRC 17069 / CCUG 31568 / BM 3577 / RP62A</strain>
    </source>
</reference>
<feature type="chain" id="PRO_0000176842" description="Small ribosomal subunit protein bS6">
    <location>
        <begin position="1"/>
        <end position="98"/>
    </location>
</feature>
<organism>
    <name type="scientific">Staphylococcus epidermidis (strain ATCC 35984 / DSM 28319 / BCRC 17069 / CCUG 31568 / BM 3577 / RP62A)</name>
    <dbReference type="NCBI Taxonomy" id="176279"/>
    <lineage>
        <taxon>Bacteria</taxon>
        <taxon>Bacillati</taxon>
        <taxon>Bacillota</taxon>
        <taxon>Bacilli</taxon>
        <taxon>Bacillales</taxon>
        <taxon>Staphylococcaceae</taxon>
        <taxon>Staphylococcus</taxon>
    </lineage>
</organism>
<accession>Q5HRZ5</accession>
<gene>
    <name evidence="1" type="primary">rpsF</name>
    <name type="ordered locus">SERP0044</name>
</gene>
<evidence type="ECO:0000255" key="1">
    <source>
        <dbReference type="HAMAP-Rule" id="MF_00360"/>
    </source>
</evidence>
<evidence type="ECO:0000305" key="2"/>
<name>RS6_STAEQ</name>